<name>AMPA_MYCBO</name>
<feature type="chain" id="PRO_0000165765" description="Probable cytosol aminopeptidase">
    <location>
        <begin position="1"/>
        <end position="515"/>
    </location>
</feature>
<feature type="active site" evidence="1">
    <location>
        <position position="291"/>
    </location>
</feature>
<feature type="active site" evidence="1">
    <location>
        <position position="365"/>
    </location>
</feature>
<feature type="binding site" evidence="1">
    <location>
        <position position="279"/>
    </location>
    <ligand>
        <name>Mn(2+)</name>
        <dbReference type="ChEBI" id="CHEBI:29035"/>
        <label>2</label>
    </ligand>
</feature>
<feature type="binding site" evidence="1">
    <location>
        <position position="284"/>
    </location>
    <ligand>
        <name>Mn(2+)</name>
        <dbReference type="ChEBI" id="CHEBI:29035"/>
        <label>1</label>
    </ligand>
</feature>
<feature type="binding site" evidence="1">
    <location>
        <position position="284"/>
    </location>
    <ligand>
        <name>Mn(2+)</name>
        <dbReference type="ChEBI" id="CHEBI:29035"/>
        <label>2</label>
    </ligand>
</feature>
<feature type="binding site" evidence="1">
    <location>
        <position position="302"/>
    </location>
    <ligand>
        <name>Mn(2+)</name>
        <dbReference type="ChEBI" id="CHEBI:29035"/>
        <label>2</label>
    </ligand>
</feature>
<feature type="binding site" evidence="1">
    <location>
        <position position="361"/>
    </location>
    <ligand>
        <name>Mn(2+)</name>
        <dbReference type="ChEBI" id="CHEBI:29035"/>
        <label>1</label>
    </ligand>
</feature>
<feature type="binding site" evidence="1">
    <location>
        <position position="363"/>
    </location>
    <ligand>
        <name>Mn(2+)</name>
        <dbReference type="ChEBI" id="CHEBI:29035"/>
        <label>1</label>
    </ligand>
</feature>
<feature type="binding site" evidence="1">
    <location>
        <position position="363"/>
    </location>
    <ligand>
        <name>Mn(2+)</name>
        <dbReference type="ChEBI" id="CHEBI:29035"/>
        <label>2</label>
    </ligand>
</feature>
<organism>
    <name type="scientific">Mycobacterium bovis (strain ATCC BAA-935 / AF2122/97)</name>
    <dbReference type="NCBI Taxonomy" id="233413"/>
    <lineage>
        <taxon>Bacteria</taxon>
        <taxon>Bacillati</taxon>
        <taxon>Actinomycetota</taxon>
        <taxon>Actinomycetes</taxon>
        <taxon>Mycobacteriales</taxon>
        <taxon>Mycobacteriaceae</taxon>
        <taxon>Mycobacterium</taxon>
        <taxon>Mycobacterium tuberculosis complex</taxon>
    </lineage>
</organism>
<reference key="1">
    <citation type="journal article" date="2003" name="Proc. Natl. Acad. Sci. U.S.A.">
        <title>The complete genome sequence of Mycobacterium bovis.</title>
        <authorList>
            <person name="Garnier T."/>
            <person name="Eiglmeier K."/>
            <person name="Camus J.-C."/>
            <person name="Medina N."/>
            <person name="Mansoor H."/>
            <person name="Pryor M."/>
            <person name="Duthoy S."/>
            <person name="Grondin S."/>
            <person name="Lacroix C."/>
            <person name="Monsempe C."/>
            <person name="Simon S."/>
            <person name="Harris B."/>
            <person name="Atkin R."/>
            <person name="Doggett J."/>
            <person name="Mayes R."/>
            <person name="Keating L."/>
            <person name="Wheeler P.R."/>
            <person name="Parkhill J."/>
            <person name="Barrell B.G."/>
            <person name="Cole S.T."/>
            <person name="Gordon S.V."/>
            <person name="Hewinson R.G."/>
        </authorList>
    </citation>
    <scope>NUCLEOTIDE SEQUENCE [LARGE SCALE GENOMIC DNA]</scope>
    <source>
        <strain>ATCC BAA-935 / AF2122/97</strain>
    </source>
</reference>
<reference key="2">
    <citation type="journal article" date="2017" name="Genome Announc.">
        <title>Updated reference genome sequence and annotation of Mycobacterium bovis AF2122/97.</title>
        <authorList>
            <person name="Malone K.M."/>
            <person name="Farrell D."/>
            <person name="Stuber T.P."/>
            <person name="Schubert O.T."/>
            <person name="Aebersold R."/>
            <person name="Robbe-Austerman S."/>
            <person name="Gordon S.V."/>
        </authorList>
    </citation>
    <scope>NUCLEOTIDE SEQUENCE [LARGE SCALE GENOMIC DNA]</scope>
    <scope>GENOME REANNOTATION</scope>
    <source>
        <strain>ATCC BAA-935 / AF2122/97</strain>
    </source>
</reference>
<proteinExistence type="inferred from homology"/>
<dbReference type="EC" id="3.4.11.1" evidence="1"/>
<dbReference type="EC" id="3.4.11.10" evidence="1"/>
<dbReference type="EMBL" id="LT708304">
    <property type="protein sequence ID" value="SIU00844.1"/>
    <property type="molecule type" value="Genomic_DNA"/>
</dbReference>
<dbReference type="RefSeq" id="NP_855885.1">
    <property type="nucleotide sequence ID" value="NC_002945.3"/>
</dbReference>
<dbReference type="RefSeq" id="WP_003411444.1">
    <property type="nucleotide sequence ID" value="NC_002945.4"/>
</dbReference>
<dbReference type="SMR" id="Q7VEN5"/>
<dbReference type="KEGG" id="mbo:BQ2027_MB2236"/>
<dbReference type="PATRIC" id="fig|233413.5.peg.2452"/>
<dbReference type="Proteomes" id="UP000001419">
    <property type="component" value="Chromosome"/>
</dbReference>
<dbReference type="GO" id="GO:0005737">
    <property type="term" value="C:cytoplasm"/>
    <property type="evidence" value="ECO:0007669"/>
    <property type="project" value="UniProtKB-SubCell"/>
</dbReference>
<dbReference type="GO" id="GO:0030145">
    <property type="term" value="F:manganese ion binding"/>
    <property type="evidence" value="ECO:0007669"/>
    <property type="project" value="UniProtKB-UniRule"/>
</dbReference>
<dbReference type="GO" id="GO:0070006">
    <property type="term" value="F:metalloaminopeptidase activity"/>
    <property type="evidence" value="ECO:0007669"/>
    <property type="project" value="InterPro"/>
</dbReference>
<dbReference type="GO" id="GO:0006508">
    <property type="term" value="P:proteolysis"/>
    <property type="evidence" value="ECO:0007669"/>
    <property type="project" value="UniProtKB-KW"/>
</dbReference>
<dbReference type="CDD" id="cd00433">
    <property type="entry name" value="Peptidase_M17"/>
    <property type="match status" value="1"/>
</dbReference>
<dbReference type="FunFam" id="3.40.630.10:FF:000087">
    <property type="entry name" value="Probable cytosol aminopeptidase"/>
    <property type="match status" value="1"/>
</dbReference>
<dbReference type="Gene3D" id="3.40.220.10">
    <property type="entry name" value="Leucine Aminopeptidase, subunit E, domain 1"/>
    <property type="match status" value="1"/>
</dbReference>
<dbReference type="Gene3D" id="3.40.630.10">
    <property type="entry name" value="Zn peptidases"/>
    <property type="match status" value="1"/>
</dbReference>
<dbReference type="HAMAP" id="MF_00181">
    <property type="entry name" value="Cytosol_peptidase_M17"/>
    <property type="match status" value="1"/>
</dbReference>
<dbReference type="InterPro" id="IPR011356">
    <property type="entry name" value="Leucine_aapep/pepB"/>
</dbReference>
<dbReference type="InterPro" id="IPR043472">
    <property type="entry name" value="Macro_dom-like"/>
</dbReference>
<dbReference type="InterPro" id="IPR000819">
    <property type="entry name" value="Peptidase_M17_C"/>
</dbReference>
<dbReference type="InterPro" id="IPR023042">
    <property type="entry name" value="Peptidase_M17_leu_NH2_pept"/>
</dbReference>
<dbReference type="InterPro" id="IPR008283">
    <property type="entry name" value="Peptidase_M17_N"/>
</dbReference>
<dbReference type="NCBIfam" id="NF002073">
    <property type="entry name" value="PRK00913.1-2"/>
    <property type="match status" value="1"/>
</dbReference>
<dbReference type="PANTHER" id="PTHR11963:SF23">
    <property type="entry name" value="CYTOSOL AMINOPEPTIDASE"/>
    <property type="match status" value="1"/>
</dbReference>
<dbReference type="PANTHER" id="PTHR11963">
    <property type="entry name" value="LEUCINE AMINOPEPTIDASE-RELATED"/>
    <property type="match status" value="1"/>
</dbReference>
<dbReference type="Pfam" id="PF00883">
    <property type="entry name" value="Peptidase_M17"/>
    <property type="match status" value="1"/>
</dbReference>
<dbReference type="Pfam" id="PF02789">
    <property type="entry name" value="Peptidase_M17_N"/>
    <property type="match status" value="1"/>
</dbReference>
<dbReference type="PRINTS" id="PR00481">
    <property type="entry name" value="LAMNOPPTDASE"/>
</dbReference>
<dbReference type="SUPFAM" id="SSF52949">
    <property type="entry name" value="Macro domain-like"/>
    <property type="match status" value="1"/>
</dbReference>
<dbReference type="SUPFAM" id="SSF53187">
    <property type="entry name" value="Zn-dependent exopeptidases"/>
    <property type="match status" value="1"/>
</dbReference>
<dbReference type="PROSITE" id="PS00631">
    <property type="entry name" value="CYTOSOL_AP"/>
    <property type="match status" value="1"/>
</dbReference>
<evidence type="ECO:0000255" key="1">
    <source>
        <dbReference type="HAMAP-Rule" id="MF_00181"/>
    </source>
</evidence>
<gene>
    <name evidence="1" type="primary">pepA</name>
    <name type="synonym">pepB</name>
    <name type="ordered locus">BQ2027_MB2236</name>
</gene>
<accession>Q7VEN5</accession>
<accession>A0A1R3Y2N9</accession>
<accession>X2BK52</accession>
<comment type="function">
    <text evidence="1">Presumably involved in the processing and regular turnover of intracellular proteins. Catalyzes the removal of unsubstituted N-terminal amino acids from various peptides.</text>
</comment>
<comment type="catalytic activity">
    <reaction evidence="1">
        <text>Release of an N-terminal amino acid, Xaa-|-Yaa-, in which Xaa is preferably Leu, but may be other amino acids including Pro although not Arg or Lys, and Yaa may be Pro. Amino acid amides and methyl esters are also readily hydrolyzed, but rates on arylamides are exceedingly low.</text>
        <dbReference type="EC" id="3.4.11.1"/>
    </reaction>
</comment>
<comment type="catalytic activity">
    <reaction evidence="1">
        <text>Release of an N-terminal amino acid, preferentially leucine, but not glutamic or aspartic acids.</text>
        <dbReference type="EC" id="3.4.11.10"/>
    </reaction>
</comment>
<comment type="cofactor">
    <cofactor evidence="1">
        <name>Mn(2+)</name>
        <dbReference type="ChEBI" id="CHEBI:29035"/>
    </cofactor>
    <text evidence="1">Binds 2 manganese ions per subunit.</text>
</comment>
<comment type="subcellular location">
    <subcellularLocation>
        <location evidence="1">Cytoplasm</location>
    </subcellularLocation>
</comment>
<comment type="similarity">
    <text evidence="1">Belongs to the peptidase M17 family.</text>
</comment>
<keyword id="KW-0031">Aminopeptidase</keyword>
<keyword id="KW-0963">Cytoplasm</keyword>
<keyword id="KW-0378">Hydrolase</keyword>
<keyword id="KW-0464">Manganese</keyword>
<keyword id="KW-0479">Metal-binding</keyword>
<keyword id="KW-0645">Protease</keyword>
<keyword id="KW-1185">Reference proteome</keyword>
<protein>
    <recommendedName>
        <fullName evidence="1">Probable cytosol aminopeptidase</fullName>
        <ecNumber evidence="1">3.4.11.1</ecNumber>
    </recommendedName>
    <alternativeName>
        <fullName evidence="1">Leucine aminopeptidase</fullName>
        <shortName evidence="1">LAP</shortName>
        <ecNumber evidence="1">3.4.11.10</ecNumber>
    </alternativeName>
    <alternativeName>
        <fullName evidence="1">Leucyl aminopeptidase</fullName>
    </alternativeName>
</protein>
<sequence>MTTEPGYLSPSVAVATSMPKRGVGAAVLIVPVVSTGEEDRPGAVVASAEPFLRADTVAEIEAGLRALDATGASDQVHRLAVPSLPVGSVLTVGLGKPRREWPADTIRCAAGVAARALNSSEAVITTLAELPGDGICSATVEGLILGSYRFSAFRSDKTAPKDAGLRKITVLCCAKDAKKRALHGAAVATAVATARDLVNTPPSHLFPAELAKRAKTLSESVGLDVEVIDEKALKKAGYGGVIGVGQGSSRPPRLVRLIHRGSRLAKNPQKAKKVALVGKGITFDTGGISIKPAASMHHMTSDMGGAAAVIATVTLAARLRLPIDVIATVPMAENMPSATAQRPGDVLTQYGGTTVEVLNTDAEGRLILADAIVRACEDKPDYLIETSTLTGAQTVALGTRIPGVMGSDEFRDRVAAISQRVGENGWPMPLPDDLKDDLKSTVADLANVSGQRFAGMLVAGVFLREFVAESVDWAHIDVAGPAYNTGSAWGYTPKGATGVPTRTMFAVLEDIAKNG</sequence>